<proteinExistence type="inferred from homology"/>
<keyword id="KW-0227">DNA damage</keyword>
<keyword id="KW-0233">DNA recombination</keyword>
<keyword id="KW-0234">DNA repair</keyword>
<accession>A5FM31</accession>
<protein>
    <recommendedName>
        <fullName evidence="1">DNA repair protein RecO</fullName>
    </recommendedName>
    <alternativeName>
        <fullName evidence="1">Recombination protein O</fullName>
    </alternativeName>
</protein>
<evidence type="ECO:0000255" key="1">
    <source>
        <dbReference type="HAMAP-Rule" id="MF_00201"/>
    </source>
</evidence>
<name>RECO_FLAJ1</name>
<gene>
    <name evidence="1" type="primary">recO</name>
    <name type="ordered locus">Fjoh_0706</name>
</gene>
<reference key="1">
    <citation type="journal article" date="2009" name="Appl. Environ. Microbiol.">
        <title>Novel features of the polysaccharide-digesting gliding bacterium Flavobacterium johnsoniae as revealed by genome sequence analysis.</title>
        <authorList>
            <person name="McBride M.J."/>
            <person name="Xie G."/>
            <person name="Martens E.C."/>
            <person name="Lapidus A."/>
            <person name="Henrissat B."/>
            <person name="Rhodes R.G."/>
            <person name="Goltsman E."/>
            <person name="Wang W."/>
            <person name="Xu J."/>
            <person name="Hunnicutt D.W."/>
            <person name="Staroscik A.M."/>
            <person name="Hoover T.R."/>
            <person name="Cheng Y.Q."/>
            <person name="Stein J.L."/>
        </authorList>
    </citation>
    <scope>NUCLEOTIDE SEQUENCE [LARGE SCALE GENOMIC DNA]</scope>
    <source>
        <strain>ATCC 17061 / DSM 2064 / JCM 8514 / BCRC 14874 / CCUG 350202 / NBRC 14942 / NCIMB 11054 / UW101</strain>
    </source>
</reference>
<dbReference type="EMBL" id="CP000685">
    <property type="protein sequence ID" value="ABQ03741.1"/>
    <property type="molecule type" value="Genomic_DNA"/>
</dbReference>
<dbReference type="RefSeq" id="WP_012022795.1">
    <property type="nucleotide sequence ID" value="NC_009441.1"/>
</dbReference>
<dbReference type="SMR" id="A5FM31"/>
<dbReference type="STRING" id="376686.Fjoh_0706"/>
<dbReference type="KEGG" id="fjo:Fjoh_0706"/>
<dbReference type="eggNOG" id="COG1381">
    <property type="taxonomic scope" value="Bacteria"/>
</dbReference>
<dbReference type="HOGENOM" id="CLU_087596_1_0_10"/>
<dbReference type="OrthoDB" id="9789152at2"/>
<dbReference type="Proteomes" id="UP000006694">
    <property type="component" value="Chromosome"/>
</dbReference>
<dbReference type="GO" id="GO:0043590">
    <property type="term" value="C:bacterial nucleoid"/>
    <property type="evidence" value="ECO:0007669"/>
    <property type="project" value="TreeGrafter"/>
</dbReference>
<dbReference type="GO" id="GO:0006310">
    <property type="term" value="P:DNA recombination"/>
    <property type="evidence" value="ECO:0007669"/>
    <property type="project" value="UniProtKB-UniRule"/>
</dbReference>
<dbReference type="GO" id="GO:0006302">
    <property type="term" value="P:double-strand break repair"/>
    <property type="evidence" value="ECO:0007669"/>
    <property type="project" value="TreeGrafter"/>
</dbReference>
<dbReference type="Gene3D" id="2.40.50.140">
    <property type="entry name" value="Nucleic acid-binding proteins"/>
    <property type="match status" value="1"/>
</dbReference>
<dbReference type="HAMAP" id="MF_00201">
    <property type="entry name" value="RecO"/>
    <property type="match status" value="1"/>
</dbReference>
<dbReference type="InterPro" id="IPR037278">
    <property type="entry name" value="ARFGAP/RecO"/>
</dbReference>
<dbReference type="InterPro" id="IPR022572">
    <property type="entry name" value="DNA_rep/recomb_RecO_N"/>
</dbReference>
<dbReference type="InterPro" id="IPR012340">
    <property type="entry name" value="NA-bd_OB-fold"/>
</dbReference>
<dbReference type="InterPro" id="IPR003717">
    <property type="entry name" value="RecO"/>
</dbReference>
<dbReference type="NCBIfam" id="TIGR00613">
    <property type="entry name" value="reco"/>
    <property type="match status" value="1"/>
</dbReference>
<dbReference type="PANTHER" id="PTHR33991">
    <property type="entry name" value="DNA REPAIR PROTEIN RECO"/>
    <property type="match status" value="1"/>
</dbReference>
<dbReference type="PANTHER" id="PTHR33991:SF1">
    <property type="entry name" value="DNA REPAIR PROTEIN RECO"/>
    <property type="match status" value="1"/>
</dbReference>
<dbReference type="Pfam" id="PF02565">
    <property type="entry name" value="RecO_C"/>
    <property type="match status" value="1"/>
</dbReference>
<dbReference type="Pfam" id="PF11967">
    <property type="entry name" value="RecO_N"/>
    <property type="match status" value="1"/>
</dbReference>
<dbReference type="SUPFAM" id="SSF57863">
    <property type="entry name" value="ArfGap/RecO-like zinc finger"/>
    <property type="match status" value="1"/>
</dbReference>
<dbReference type="SUPFAM" id="SSF50249">
    <property type="entry name" value="Nucleic acid-binding proteins"/>
    <property type="match status" value="1"/>
</dbReference>
<comment type="function">
    <text evidence="1">Involved in DNA repair and RecF pathway recombination.</text>
</comment>
<comment type="similarity">
    <text evidence="1">Belongs to the RecO family.</text>
</comment>
<sequence length="237" mass="27647">MQIKTKAIVISSLKFQEKSLIVKCFTLSNGLKSYFVRDAFSSRKASQKIAYFQPLSILEIEAVHKNKGTLENFKEIKTAVPFQTIHTDIFKSTIVMFLSEMLHYSIQEEEKNEPLFVFLETALTWLDHHDDISNFHLILLLEITKYLGFYPDVSEIDLPYFEMKEGIFTLFHTSTALSEHETNLLKKLLDLKFDNSQKVFHVVERQILLRVLIDFYSAHLDGFKKPKSLDILKEIFS</sequence>
<organism>
    <name type="scientific">Flavobacterium johnsoniae (strain ATCC 17061 / DSM 2064 / JCM 8514 / BCRC 14874 / CCUG 350202 / NBRC 14942 / NCIMB 11054 / UW101)</name>
    <name type="common">Cytophaga johnsonae</name>
    <dbReference type="NCBI Taxonomy" id="376686"/>
    <lineage>
        <taxon>Bacteria</taxon>
        <taxon>Pseudomonadati</taxon>
        <taxon>Bacteroidota</taxon>
        <taxon>Flavobacteriia</taxon>
        <taxon>Flavobacteriales</taxon>
        <taxon>Flavobacteriaceae</taxon>
        <taxon>Flavobacterium</taxon>
    </lineage>
</organism>
<feature type="chain" id="PRO_1000193377" description="DNA repair protein RecO">
    <location>
        <begin position="1"/>
        <end position="237"/>
    </location>
</feature>